<reference key="1">
    <citation type="journal article" date="2007" name="Genome Biol.">
        <title>Comparison of Francisella tularensis genomes reveals evolutionary events associated with the emergence of human pathogenic strains.</title>
        <authorList>
            <person name="Rohmer L."/>
            <person name="Fong C."/>
            <person name="Abmayr S."/>
            <person name="Wasnick M."/>
            <person name="Larson Freeman T.J."/>
            <person name="Radey M."/>
            <person name="Guina T."/>
            <person name="Svensson K."/>
            <person name="Hayden H.S."/>
            <person name="Jacobs M."/>
            <person name="Gallagher L.A."/>
            <person name="Manoil C."/>
            <person name="Ernst R.K."/>
            <person name="Drees B."/>
            <person name="Buckley D."/>
            <person name="Haugen E."/>
            <person name="Bovee D."/>
            <person name="Zhou Y."/>
            <person name="Chang J."/>
            <person name="Levy R."/>
            <person name="Lim R."/>
            <person name="Gillett W."/>
            <person name="Guenthener D."/>
            <person name="Kang A."/>
            <person name="Shaffer S.A."/>
            <person name="Taylor G."/>
            <person name="Chen J."/>
            <person name="Gallis B."/>
            <person name="D'Argenio D.A."/>
            <person name="Forsman M."/>
            <person name="Olson M.V."/>
            <person name="Goodlett D.R."/>
            <person name="Kaul R."/>
            <person name="Miller S.I."/>
            <person name="Brittnacher M.J."/>
        </authorList>
    </citation>
    <scope>NUCLEOTIDE SEQUENCE [LARGE SCALE GENOMIC DNA]</scope>
    <source>
        <strain>U112</strain>
    </source>
</reference>
<keyword id="KW-0067">ATP-binding</keyword>
<keyword id="KW-0963">Cytoplasm</keyword>
<keyword id="KW-0275">Fatty acid biosynthesis</keyword>
<keyword id="KW-0276">Fatty acid metabolism</keyword>
<keyword id="KW-0444">Lipid biosynthesis</keyword>
<keyword id="KW-0443">Lipid metabolism</keyword>
<keyword id="KW-0547">Nucleotide-binding</keyword>
<keyword id="KW-0808">Transferase</keyword>
<comment type="function">
    <text evidence="1">Component of the acetyl coenzyme A carboxylase (ACC) complex. First, biotin carboxylase catalyzes the carboxylation of biotin on its carrier protein (BCCP) and then the CO(2) group is transferred by the carboxyltransferase to acetyl-CoA to form malonyl-CoA.</text>
</comment>
<comment type="catalytic activity">
    <reaction evidence="1">
        <text>N(6)-carboxybiotinyl-L-lysyl-[protein] + acetyl-CoA = N(6)-biotinyl-L-lysyl-[protein] + malonyl-CoA</text>
        <dbReference type="Rhea" id="RHEA:54728"/>
        <dbReference type="Rhea" id="RHEA-COMP:10505"/>
        <dbReference type="Rhea" id="RHEA-COMP:10506"/>
        <dbReference type="ChEBI" id="CHEBI:57288"/>
        <dbReference type="ChEBI" id="CHEBI:57384"/>
        <dbReference type="ChEBI" id="CHEBI:83144"/>
        <dbReference type="ChEBI" id="CHEBI:83145"/>
        <dbReference type="EC" id="2.1.3.15"/>
    </reaction>
</comment>
<comment type="pathway">
    <text evidence="1">Lipid metabolism; malonyl-CoA biosynthesis; malonyl-CoA from acetyl-CoA: step 1/1.</text>
</comment>
<comment type="subunit">
    <text evidence="1">Acetyl-CoA carboxylase is a heterohexamer composed of biotin carboxyl carrier protein (AccB), biotin carboxylase (AccC) and two subunits each of ACCase subunit alpha (AccA) and ACCase subunit beta (AccD).</text>
</comment>
<comment type="subcellular location">
    <subcellularLocation>
        <location evidence="1">Cytoplasm</location>
    </subcellularLocation>
</comment>
<comment type="similarity">
    <text evidence="1">Belongs to the AccA family.</text>
</comment>
<gene>
    <name evidence="1" type="primary">accA</name>
    <name type="ordered locus">FTN_1508</name>
</gene>
<feature type="chain" id="PRO_1000062622" description="Acetyl-coenzyme A carboxylase carboxyl transferase subunit alpha">
    <location>
        <begin position="1"/>
        <end position="315"/>
    </location>
</feature>
<feature type="domain" description="CoA carboxyltransferase C-terminal" evidence="2">
    <location>
        <begin position="36"/>
        <end position="289"/>
    </location>
</feature>
<proteinExistence type="inferred from homology"/>
<dbReference type="EC" id="2.1.3.15" evidence="1"/>
<dbReference type="EMBL" id="CP000439">
    <property type="protein sequence ID" value="ABK90373.1"/>
    <property type="molecule type" value="Genomic_DNA"/>
</dbReference>
<dbReference type="RefSeq" id="WP_003018337.1">
    <property type="nucleotide sequence ID" value="NZ_CP009633.1"/>
</dbReference>
<dbReference type="SMR" id="A0Q808"/>
<dbReference type="KEGG" id="ftn:FTN_1508"/>
<dbReference type="KEGG" id="ftx:AW25_493"/>
<dbReference type="BioCyc" id="FTUL401614:G1G75-1556-MONOMER"/>
<dbReference type="UniPathway" id="UPA00655">
    <property type="reaction ID" value="UER00711"/>
</dbReference>
<dbReference type="Proteomes" id="UP000000762">
    <property type="component" value="Chromosome"/>
</dbReference>
<dbReference type="GO" id="GO:0009317">
    <property type="term" value="C:acetyl-CoA carboxylase complex"/>
    <property type="evidence" value="ECO:0007669"/>
    <property type="project" value="InterPro"/>
</dbReference>
<dbReference type="GO" id="GO:0003989">
    <property type="term" value="F:acetyl-CoA carboxylase activity"/>
    <property type="evidence" value="ECO:0007669"/>
    <property type="project" value="InterPro"/>
</dbReference>
<dbReference type="GO" id="GO:0005524">
    <property type="term" value="F:ATP binding"/>
    <property type="evidence" value="ECO:0007669"/>
    <property type="project" value="UniProtKB-KW"/>
</dbReference>
<dbReference type="GO" id="GO:0016743">
    <property type="term" value="F:carboxyl- or carbamoyltransferase activity"/>
    <property type="evidence" value="ECO:0007669"/>
    <property type="project" value="UniProtKB-UniRule"/>
</dbReference>
<dbReference type="GO" id="GO:0006633">
    <property type="term" value="P:fatty acid biosynthetic process"/>
    <property type="evidence" value="ECO:0007669"/>
    <property type="project" value="UniProtKB-KW"/>
</dbReference>
<dbReference type="GO" id="GO:2001295">
    <property type="term" value="P:malonyl-CoA biosynthetic process"/>
    <property type="evidence" value="ECO:0007669"/>
    <property type="project" value="UniProtKB-UniRule"/>
</dbReference>
<dbReference type="Gene3D" id="3.90.226.10">
    <property type="entry name" value="2-enoyl-CoA Hydratase, Chain A, domain 1"/>
    <property type="match status" value="1"/>
</dbReference>
<dbReference type="HAMAP" id="MF_00823">
    <property type="entry name" value="AcetylCoA_CT_alpha"/>
    <property type="match status" value="1"/>
</dbReference>
<dbReference type="InterPro" id="IPR001095">
    <property type="entry name" value="Acetyl_CoA_COase_a_su"/>
</dbReference>
<dbReference type="InterPro" id="IPR029045">
    <property type="entry name" value="ClpP/crotonase-like_dom_sf"/>
</dbReference>
<dbReference type="InterPro" id="IPR011763">
    <property type="entry name" value="COA_CT_C"/>
</dbReference>
<dbReference type="NCBIfam" id="TIGR00513">
    <property type="entry name" value="accA"/>
    <property type="match status" value="1"/>
</dbReference>
<dbReference type="NCBIfam" id="NF041504">
    <property type="entry name" value="AccA_sub"/>
    <property type="match status" value="1"/>
</dbReference>
<dbReference type="NCBIfam" id="NF004344">
    <property type="entry name" value="PRK05724.1"/>
    <property type="match status" value="1"/>
</dbReference>
<dbReference type="PANTHER" id="PTHR42853">
    <property type="entry name" value="ACETYL-COENZYME A CARBOXYLASE CARBOXYL TRANSFERASE SUBUNIT ALPHA"/>
    <property type="match status" value="1"/>
</dbReference>
<dbReference type="PANTHER" id="PTHR42853:SF3">
    <property type="entry name" value="ACETYL-COENZYME A CARBOXYLASE CARBOXYL TRANSFERASE SUBUNIT ALPHA, CHLOROPLASTIC"/>
    <property type="match status" value="1"/>
</dbReference>
<dbReference type="Pfam" id="PF03255">
    <property type="entry name" value="ACCA"/>
    <property type="match status" value="1"/>
</dbReference>
<dbReference type="PRINTS" id="PR01069">
    <property type="entry name" value="ACCCTRFRASEA"/>
</dbReference>
<dbReference type="SUPFAM" id="SSF52096">
    <property type="entry name" value="ClpP/crotonase"/>
    <property type="match status" value="1"/>
</dbReference>
<dbReference type="PROSITE" id="PS50989">
    <property type="entry name" value="COA_CT_CTER"/>
    <property type="match status" value="1"/>
</dbReference>
<sequence>MNYLDFESKIKEIEDKITSLSHVFEDEKTEAEIKKLSKKRLELMESTYSKLTDWQVVQLSRHPDRPYFKDLLPLIFTDFQELHGDRTFGDDLAVIGGLAKLNNKPVMVIGQEKGRDTKSKIKHNFGMMHPEGYRKALRLMKLAEKFNMPVVTFIDTPGAYPGIKAEERGQSEAIARNLLEMSALKVPVVCIVIGEGCSGGALGIGVGDRLLMLQYSYFATISPEGCASILHKTAEKASEVTQMMNITSGRLKELKIVDEVIPEPLGGAHRDYETTATNIRKAVAAELKILSEMTVEQRNSRRYDKLMSFGRFKEA</sequence>
<name>ACCA_FRATN</name>
<evidence type="ECO:0000255" key="1">
    <source>
        <dbReference type="HAMAP-Rule" id="MF_00823"/>
    </source>
</evidence>
<evidence type="ECO:0000255" key="2">
    <source>
        <dbReference type="PROSITE-ProRule" id="PRU01137"/>
    </source>
</evidence>
<accession>A0Q808</accession>
<organism>
    <name type="scientific">Francisella tularensis subsp. novicida (strain U112)</name>
    <dbReference type="NCBI Taxonomy" id="401614"/>
    <lineage>
        <taxon>Bacteria</taxon>
        <taxon>Pseudomonadati</taxon>
        <taxon>Pseudomonadota</taxon>
        <taxon>Gammaproteobacteria</taxon>
        <taxon>Thiotrichales</taxon>
        <taxon>Francisellaceae</taxon>
        <taxon>Francisella</taxon>
    </lineage>
</organism>
<protein>
    <recommendedName>
        <fullName evidence="1">Acetyl-coenzyme A carboxylase carboxyl transferase subunit alpha</fullName>
        <shortName evidence="1">ACCase subunit alpha</shortName>
        <shortName evidence="1">Acetyl-CoA carboxylase carboxyltransferase subunit alpha</shortName>
        <ecNumber evidence="1">2.1.3.15</ecNumber>
    </recommendedName>
</protein>